<protein>
    <recommendedName>
        <fullName>Tetraspanin-31</fullName>
        <shortName>Tspan-31</shortName>
    </recommendedName>
    <alternativeName>
        <fullName>Sarcoma-amplified sequence homolog</fullName>
    </alternativeName>
</protein>
<comment type="subcellular location">
    <subcellularLocation>
        <location evidence="1">Membrane</location>
        <topology evidence="1">Multi-pass membrane protein</topology>
    </subcellularLocation>
</comment>
<comment type="similarity">
    <text evidence="4">Belongs to the tetraspanin (TM4SF) family.</text>
</comment>
<evidence type="ECO:0000250" key="1"/>
<evidence type="ECO:0000255" key="2"/>
<evidence type="ECO:0000269" key="3">
    <source>
    </source>
</evidence>
<evidence type="ECO:0000305" key="4"/>
<sequence length="210" mass="22694">MVCGGFACSRNALCALNVVYMLVGFLLIGVAAWGKGLGVVSSIHIIGGVIAVGVFLLLIAVAGLVGAANHHQVLLFFYMIILGLVFIFQFGISCSCLAINRNTQADVINASWSVLSNSTRHELERSFDCCGLFNLTTLRLQDDTSCSAVCKTKSSTCQMCGERFLKHSDKALKILGGVGLFFSFTEILGVWLAMRFRNQKDPRANPSAFL</sequence>
<organism>
    <name type="scientific">Mus musculus</name>
    <name type="common">Mouse</name>
    <dbReference type="NCBI Taxonomy" id="10090"/>
    <lineage>
        <taxon>Eukaryota</taxon>
        <taxon>Metazoa</taxon>
        <taxon>Chordata</taxon>
        <taxon>Craniata</taxon>
        <taxon>Vertebrata</taxon>
        <taxon>Euteleostomi</taxon>
        <taxon>Mammalia</taxon>
        <taxon>Eutheria</taxon>
        <taxon>Euarchontoglires</taxon>
        <taxon>Glires</taxon>
        <taxon>Rodentia</taxon>
        <taxon>Myomorpha</taxon>
        <taxon>Muroidea</taxon>
        <taxon>Muridae</taxon>
        <taxon>Murinae</taxon>
        <taxon>Mus</taxon>
        <taxon>Mus</taxon>
    </lineage>
</organism>
<dbReference type="EMBL" id="AK012457">
    <property type="protein sequence ID" value="BAB28252.1"/>
    <property type="molecule type" value="mRNA"/>
</dbReference>
<dbReference type="EMBL" id="AK013523">
    <property type="protein sequence ID" value="BAB28897.1"/>
    <property type="molecule type" value="mRNA"/>
</dbReference>
<dbReference type="EMBL" id="AK014183">
    <property type="protein sequence ID" value="BAB29196.1"/>
    <property type="molecule type" value="mRNA"/>
</dbReference>
<dbReference type="EMBL" id="AK075962">
    <property type="protein sequence ID" value="BAC36084.1"/>
    <property type="molecule type" value="mRNA"/>
</dbReference>
<dbReference type="EMBL" id="BC023306">
    <property type="protein sequence ID" value="AAH23306.1"/>
    <property type="molecule type" value="mRNA"/>
</dbReference>
<dbReference type="CCDS" id="CCDS24227.1"/>
<dbReference type="RefSeq" id="NP_080258.1">
    <property type="nucleotide sequence ID" value="NM_025982.4"/>
</dbReference>
<dbReference type="SMR" id="Q9CQ88"/>
<dbReference type="FunCoup" id="Q9CQ88">
    <property type="interactions" value="1199"/>
</dbReference>
<dbReference type="STRING" id="10090.ENSMUSP00000057751"/>
<dbReference type="GlyCosmos" id="Q9CQ88">
    <property type="glycosylation" value="3 sites, No reported glycans"/>
</dbReference>
<dbReference type="GlyGen" id="Q9CQ88">
    <property type="glycosylation" value="4 sites, 2 N-linked glycans (2 sites), 1 O-linked glycan (1 site)"/>
</dbReference>
<dbReference type="iPTMnet" id="Q9CQ88"/>
<dbReference type="PhosphoSitePlus" id="Q9CQ88"/>
<dbReference type="SwissPalm" id="Q9CQ88"/>
<dbReference type="jPOST" id="Q9CQ88"/>
<dbReference type="PaxDb" id="10090-ENSMUSP00000057751"/>
<dbReference type="PeptideAtlas" id="Q9CQ88"/>
<dbReference type="ProteomicsDB" id="297987"/>
<dbReference type="Pumba" id="Q9CQ88"/>
<dbReference type="Antibodypedia" id="28904">
    <property type="antibodies" value="130 antibodies from 26 providers"/>
</dbReference>
<dbReference type="DNASU" id="67125"/>
<dbReference type="Ensembl" id="ENSMUST00000060991.6">
    <property type="protein sequence ID" value="ENSMUSP00000057751.5"/>
    <property type="gene ID" value="ENSMUSG00000006736.10"/>
</dbReference>
<dbReference type="GeneID" id="67125"/>
<dbReference type="KEGG" id="mmu:67125"/>
<dbReference type="UCSC" id="uc007hhw.1">
    <property type="organism name" value="mouse"/>
</dbReference>
<dbReference type="AGR" id="MGI:1914375"/>
<dbReference type="CTD" id="6302"/>
<dbReference type="MGI" id="MGI:1914375">
    <property type="gene designation" value="Tspan31"/>
</dbReference>
<dbReference type="VEuPathDB" id="HostDB:ENSMUSG00000006736"/>
<dbReference type="eggNOG" id="KOG3882">
    <property type="taxonomic scope" value="Eukaryota"/>
</dbReference>
<dbReference type="GeneTree" id="ENSGT00940000160351"/>
<dbReference type="HOGENOM" id="CLU_088363_0_0_1"/>
<dbReference type="InParanoid" id="Q9CQ88"/>
<dbReference type="OMA" id="CHAPCKA"/>
<dbReference type="OrthoDB" id="5845060at2759"/>
<dbReference type="PhylomeDB" id="Q9CQ88"/>
<dbReference type="TreeFam" id="TF323367"/>
<dbReference type="BioGRID-ORCS" id="67125">
    <property type="hits" value="0 hits in 77 CRISPR screens"/>
</dbReference>
<dbReference type="ChiTaRS" id="Tspan31">
    <property type="organism name" value="mouse"/>
</dbReference>
<dbReference type="PRO" id="PR:Q9CQ88"/>
<dbReference type="Proteomes" id="UP000000589">
    <property type="component" value="Chromosome 10"/>
</dbReference>
<dbReference type="RNAct" id="Q9CQ88">
    <property type="molecule type" value="protein"/>
</dbReference>
<dbReference type="Bgee" id="ENSMUSG00000006736">
    <property type="expression patterns" value="Expressed in left lobe of liver and 252 other cell types or tissues"/>
</dbReference>
<dbReference type="GO" id="GO:0016020">
    <property type="term" value="C:membrane"/>
    <property type="evidence" value="ECO:0007669"/>
    <property type="project" value="UniProtKB-SubCell"/>
</dbReference>
<dbReference type="InterPro" id="IPR018499">
    <property type="entry name" value="Tetraspanin/Peripherin"/>
</dbReference>
<dbReference type="InterPro" id="IPR000301">
    <property type="entry name" value="Tetraspanin_animals"/>
</dbReference>
<dbReference type="PANTHER" id="PTHR19282">
    <property type="entry name" value="TETRASPANIN"/>
    <property type="match status" value="1"/>
</dbReference>
<dbReference type="PANTHER" id="PTHR19282:SF3">
    <property type="entry name" value="TETRASPANIN-31"/>
    <property type="match status" value="1"/>
</dbReference>
<dbReference type="Pfam" id="PF00335">
    <property type="entry name" value="Tetraspanin"/>
    <property type="match status" value="1"/>
</dbReference>
<dbReference type="PIRSF" id="PIRSF002419">
    <property type="entry name" value="Tetraspanin"/>
    <property type="match status" value="1"/>
</dbReference>
<dbReference type="PRINTS" id="PR00259">
    <property type="entry name" value="TMFOUR"/>
</dbReference>
<keyword id="KW-0325">Glycoprotein</keyword>
<keyword id="KW-0472">Membrane</keyword>
<keyword id="KW-1185">Reference proteome</keyword>
<keyword id="KW-0812">Transmembrane</keyword>
<keyword id="KW-1133">Transmembrane helix</keyword>
<feature type="chain" id="PRO_0000219271" description="Tetraspanin-31">
    <location>
        <begin position="1"/>
        <end position="210"/>
    </location>
</feature>
<feature type="topological domain" description="Cytoplasmic" evidence="2">
    <location>
        <begin position="1"/>
        <end position="12"/>
    </location>
</feature>
<feature type="transmembrane region" description="Helical" evidence="2">
    <location>
        <begin position="13"/>
        <end position="33"/>
    </location>
</feature>
<feature type="topological domain" description="Extracellular" evidence="2">
    <location>
        <begin position="34"/>
        <end position="44"/>
    </location>
</feature>
<feature type="transmembrane region" description="Helical" evidence="2">
    <location>
        <begin position="45"/>
        <end position="65"/>
    </location>
</feature>
<feature type="topological domain" description="Cytoplasmic" evidence="2">
    <location>
        <begin position="66"/>
        <end position="72"/>
    </location>
</feature>
<feature type="transmembrane region" description="Helical" evidence="2">
    <location>
        <begin position="73"/>
        <end position="93"/>
    </location>
</feature>
<feature type="topological domain" description="Extracellular" evidence="2">
    <location>
        <begin position="94"/>
        <end position="173"/>
    </location>
</feature>
<feature type="transmembrane region" description="Helical" evidence="2">
    <location>
        <begin position="174"/>
        <end position="194"/>
    </location>
</feature>
<feature type="topological domain" description="Cytoplasmic" evidence="2">
    <location>
        <begin position="195"/>
        <end position="210"/>
    </location>
</feature>
<feature type="glycosylation site" description="N-linked (GlcNAc...) asparagine" evidence="2">
    <location>
        <position position="109"/>
    </location>
</feature>
<feature type="glycosylation site" description="N-linked (GlcNAc...) asparagine" evidence="3">
    <location>
        <position position="117"/>
    </location>
</feature>
<feature type="glycosylation site" description="N-linked (GlcNAc...) asparagine" evidence="2">
    <location>
        <position position="134"/>
    </location>
</feature>
<name>TSN31_MOUSE</name>
<accession>Q9CQ88</accession>
<accession>Q9CUY7</accession>
<gene>
    <name type="primary">Tspan31</name>
    <name type="synonym">Sas</name>
</gene>
<reference key="1">
    <citation type="journal article" date="2005" name="Science">
        <title>The transcriptional landscape of the mammalian genome.</title>
        <authorList>
            <person name="Carninci P."/>
            <person name="Kasukawa T."/>
            <person name="Katayama S."/>
            <person name="Gough J."/>
            <person name="Frith M.C."/>
            <person name="Maeda N."/>
            <person name="Oyama R."/>
            <person name="Ravasi T."/>
            <person name="Lenhard B."/>
            <person name="Wells C."/>
            <person name="Kodzius R."/>
            <person name="Shimokawa K."/>
            <person name="Bajic V.B."/>
            <person name="Brenner S.E."/>
            <person name="Batalov S."/>
            <person name="Forrest A.R."/>
            <person name="Zavolan M."/>
            <person name="Davis M.J."/>
            <person name="Wilming L.G."/>
            <person name="Aidinis V."/>
            <person name="Allen J.E."/>
            <person name="Ambesi-Impiombato A."/>
            <person name="Apweiler R."/>
            <person name="Aturaliya R.N."/>
            <person name="Bailey T.L."/>
            <person name="Bansal M."/>
            <person name="Baxter L."/>
            <person name="Beisel K.W."/>
            <person name="Bersano T."/>
            <person name="Bono H."/>
            <person name="Chalk A.M."/>
            <person name="Chiu K.P."/>
            <person name="Choudhary V."/>
            <person name="Christoffels A."/>
            <person name="Clutterbuck D.R."/>
            <person name="Crowe M.L."/>
            <person name="Dalla E."/>
            <person name="Dalrymple B.P."/>
            <person name="de Bono B."/>
            <person name="Della Gatta G."/>
            <person name="di Bernardo D."/>
            <person name="Down T."/>
            <person name="Engstrom P."/>
            <person name="Fagiolini M."/>
            <person name="Faulkner G."/>
            <person name="Fletcher C.F."/>
            <person name="Fukushima T."/>
            <person name="Furuno M."/>
            <person name="Futaki S."/>
            <person name="Gariboldi M."/>
            <person name="Georgii-Hemming P."/>
            <person name="Gingeras T.R."/>
            <person name="Gojobori T."/>
            <person name="Green R.E."/>
            <person name="Gustincich S."/>
            <person name="Harbers M."/>
            <person name="Hayashi Y."/>
            <person name="Hensch T.K."/>
            <person name="Hirokawa N."/>
            <person name="Hill D."/>
            <person name="Huminiecki L."/>
            <person name="Iacono M."/>
            <person name="Ikeo K."/>
            <person name="Iwama A."/>
            <person name="Ishikawa T."/>
            <person name="Jakt M."/>
            <person name="Kanapin A."/>
            <person name="Katoh M."/>
            <person name="Kawasawa Y."/>
            <person name="Kelso J."/>
            <person name="Kitamura H."/>
            <person name="Kitano H."/>
            <person name="Kollias G."/>
            <person name="Krishnan S.P."/>
            <person name="Kruger A."/>
            <person name="Kummerfeld S.K."/>
            <person name="Kurochkin I.V."/>
            <person name="Lareau L.F."/>
            <person name="Lazarevic D."/>
            <person name="Lipovich L."/>
            <person name="Liu J."/>
            <person name="Liuni S."/>
            <person name="McWilliam S."/>
            <person name="Madan Babu M."/>
            <person name="Madera M."/>
            <person name="Marchionni L."/>
            <person name="Matsuda H."/>
            <person name="Matsuzawa S."/>
            <person name="Miki H."/>
            <person name="Mignone F."/>
            <person name="Miyake S."/>
            <person name="Morris K."/>
            <person name="Mottagui-Tabar S."/>
            <person name="Mulder N."/>
            <person name="Nakano N."/>
            <person name="Nakauchi H."/>
            <person name="Ng P."/>
            <person name="Nilsson R."/>
            <person name="Nishiguchi S."/>
            <person name="Nishikawa S."/>
            <person name="Nori F."/>
            <person name="Ohara O."/>
            <person name="Okazaki Y."/>
            <person name="Orlando V."/>
            <person name="Pang K.C."/>
            <person name="Pavan W.J."/>
            <person name="Pavesi G."/>
            <person name="Pesole G."/>
            <person name="Petrovsky N."/>
            <person name="Piazza S."/>
            <person name="Reed J."/>
            <person name="Reid J.F."/>
            <person name="Ring B.Z."/>
            <person name="Ringwald M."/>
            <person name="Rost B."/>
            <person name="Ruan Y."/>
            <person name="Salzberg S.L."/>
            <person name="Sandelin A."/>
            <person name="Schneider C."/>
            <person name="Schoenbach C."/>
            <person name="Sekiguchi K."/>
            <person name="Semple C.A."/>
            <person name="Seno S."/>
            <person name="Sessa L."/>
            <person name="Sheng Y."/>
            <person name="Shibata Y."/>
            <person name="Shimada H."/>
            <person name="Shimada K."/>
            <person name="Silva D."/>
            <person name="Sinclair B."/>
            <person name="Sperling S."/>
            <person name="Stupka E."/>
            <person name="Sugiura K."/>
            <person name="Sultana R."/>
            <person name="Takenaka Y."/>
            <person name="Taki K."/>
            <person name="Tammoja K."/>
            <person name="Tan S.L."/>
            <person name="Tang S."/>
            <person name="Taylor M.S."/>
            <person name="Tegner J."/>
            <person name="Teichmann S.A."/>
            <person name="Ueda H.R."/>
            <person name="van Nimwegen E."/>
            <person name="Verardo R."/>
            <person name="Wei C.L."/>
            <person name="Yagi K."/>
            <person name="Yamanishi H."/>
            <person name="Zabarovsky E."/>
            <person name="Zhu S."/>
            <person name="Zimmer A."/>
            <person name="Hide W."/>
            <person name="Bult C."/>
            <person name="Grimmond S.M."/>
            <person name="Teasdale R.D."/>
            <person name="Liu E.T."/>
            <person name="Brusic V."/>
            <person name="Quackenbush J."/>
            <person name="Wahlestedt C."/>
            <person name="Mattick J.S."/>
            <person name="Hume D.A."/>
            <person name="Kai C."/>
            <person name="Sasaki D."/>
            <person name="Tomaru Y."/>
            <person name="Fukuda S."/>
            <person name="Kanamori-Katayama M."/>
            <person name="Suzuki M."/>
            <person name="Aoki J."/>
            <person name="Arakawa T."/>
            <person name="Iida J."/>
            <person name="Imamura K."/>
            <person name="Itoh M."/>
            <person name="Kato T."/>
            <person name="Kawaji H."/>
            <person name="Kawagashira N."/>
            <person name="Kawashima T."/>
            <person name="Kojima M."/>
            <person name="Kondo S."/>
            <person name="Konno H."/>
            <person name="Nakano K."/>
            <person name="Ninomiya N."/>
            <person name="Nishio T."/>
            <person name="Okada M."/>
            <person name="Plessy C."/>
            <person name="Shibata K."/>
            <person name="Shiraki T."/>
            <person name="Suzuki S."/>
            <person name="Tagami M."/>
            <person name="Waki K."/>
            <person name="Watahiki A."/>
            <person name="Okamura-Oho Y."/>
            <person name="Suzuki H."/>
            <person name="Kawai J."/>
            <person name="Hayashizaki Y."/>
        </authorList>
    </citation>
    <scope>NUCLEOTIDE SEQUENCE [LARGE SCALE MRNA]</scope>
    <source>
        <strain>C57BL/6J</strain>
        <tissue>Head</tissue>
        <tissue>Hippocampus</tissue>
        <tissue>Liver</tissue>
    </source>
</reference>
<reference key="2">
    <citation type="journal article" date="2004" name="Genome Res.">
        <title>The status, quality, and expansion of the NIH full-length cDNA project: the Mammalian Gene Collection (MGC).</title>
        <authorList>
            <consortium name="The MGC Project Team"/>
        </authorList>
    </citation>
    <scope>NUCLEOTIDE SEQUENCE [LARGE SCALE MRNA]</scope>
    <source>
        <strain>FVB/N</strain>
        <tissue>Salivary gland</tissue>
    </source>
</reference>
<reference key="3">
    <citation type="journal article" date="2009" name="Nat. Biotechnol.">
        <title>Mass-spectrometric identification and relative quantification of N-linked cell surface glycoproteins.</title>
        <authorList>
            <person name="Wollscheid B."/>
            <person name="Bausch-Fluck D."/>
            <person name="Henderson C."/>
            <person name="O'Brien R."/>
            <person name="Bibel M."/>
            <person name="Schiess R."/>
            <person name="Aebersold R."/>
            <person name="Watts J.D."/>
        </authorList>
    </citation>
    <scope>GLYCOSYLATION [LARGE SCALE ANALYSIS] AT ASN-117</scope>
</reference>
<reference key="4">
    <citation type="journal article" date="2010" name="Cell">
        <title>A tissue-specific atlas of mouse protein phosphorylation and expression.</title>
        <authorList>
            <person name="Huttlin E.L."/>
            <person name="Jedrychowski M.P."/>
            <person name="Elias J.E."/>
            <person name="Goswami T."/>
            <person name="Rad R."/>
            <person name="Beausoleil S.A."/>
            <person name="Villen J."/>
            <person name="Haas W."/>
            <person name="Sowa M.E."/>
            <person name="Gygi S.P."/>
        </authorList>
    </citation>
    <scope>IDENTIFICATION BY MASS SPECTROMETRY [LARGE SCALE ANALYSIS]</scope>
    <source>
        <tissue>Brain</tissue>
        <tissue>Brown adipose tissue</tissue>
        <tissue>Heart</tissue>
        <tissue>Kidney</tissue>
        <tissue>Liver</tissue>
        <tissue>Lung</tissue>
        <tissue>Pancreas</tissue>
        <tissue>Spleen</tissue>
        <tissue>Testis</tissue>
    </source>
</reference>
<proteinExistence type="evidence at protein level"/>